<sequence>MSLNMFWFLPTHGDGHYLGTEEGSRPVDHGYLQQIAQAADRLGYTGVLIPTGRSCEDAWLVAASMIPVTQRLKFLVALRPSVTSPTVAARQAATLDRLSNGRALFNLVTGSDPQELAGDGVFLDHSERYEASAEFTQVWRRLLLGETVDFNGKHIHVRGAKLLFPPIQQPYPPLYFGGSSDVAQELAAEQVDLYLTWGEPPELVKEKIEQVRAKAAAHGRKIRFGIRLHVIVRETNGEAWQAAERLISHLDDETIAKAQAAFARTDSVGQQRMAALHNGKRDNLEISPNLWAGVGLVRGGAGTALVGDGPTVAARINEYAALGIDSFVLSGYPHLEEAYRVGELLFPHLDVAIPEIPQPQPLNPQGEAVANDFIPRNVAQS</sequence>
<dbReference type="EC" id="1.14.14.5" evidence="1"/>
<dbReference type="EMBL" id="CP000970">
    <property type="protein sequence ID" value="ACB16159.1"/>
    <property type="molecule type" value="Genomic_DNA"/>
</dbReference>
<dbReference type="RefSeq" id="WP_000055984.1">
    <property type="nucleotide sequence ID" value="NC_010498.1"/>
</dbReference>
<dbReference type="SMR" id="B1LJS7"/>
<dbReference type="KEGG" id="ecm:EcSMS35_2184"/>
<dbReference type="HOGENOM" id="CLU_027853_1_0_6"/>
<dbReference type="Proteomes" id="UP000007011">
    <property type="component" value="Chromosome"/>
</dbReference>
<dbReference type="GO" id="GO:0008726">
    <property type="term" value="F:alkanesulfonate monooxygenase activity"/>
    <property type="evidence" value="ECO:0007669"/>
    <property type="project" value="UniProtKB-UniRule"/>
</dbReference>
<dbReference type="GO" id="GO:0046306">
    <property type="term" value="P:alkanesulfonate catabolic process"/>
    <property type="evidence" value="ECO:0007669"/>
    <property type="project" value="TreeGrafter"/>
</dbReference>
<dbReference type="CDD" id="cd01094">
    <property type="entry name" value="Alkanesulfonate_monoxygenase"/>
    <property type="match status" value="1"/>
</dbReference>
<dbReference type="FunFam" id="3.20.20.30:FF:000001">
    <property type="entry name" value="Alkanesulfonate monooxygenase"/>
    <property type="match status" value="1"/>
</dbReference>
<dbReference type="Gene3D" id="3.20.20.30">
    <property type="entry name" value="Luciferase-like domain"/>
    <property type="match status" value="1"/>
</dbReference>
<dbReference type="HAMAP" id="MF_01229">
    <property type="entry name" value="Alkanesulf_monooxygen"/>
    <property type="match status" value="1"/>
</dbReference>
<dbReference type="InterPro" id="IPR019911">
    <property type="entry name" value="Alkanesulphonate_mOase_FMN-dep"/>
</dbReference>
<dbReference type="InterPro" id="IPR011251">
    <property type="entry name" value="Luciferase-like_dom"/>
</dbReference>
<dbReference type="InterPro" id="IPR036661">
    <property type="entry name" value="Luciferase-like_sf"/>
</dbReference>
<dbReference type="InterPro" id="IPR050172">
    <property type="entry name" value="SsuD_RutA_monooxygenase"/>
</dbReference>
<dbReference type="NCBIfam" id="TIGR03565">
    <property type="entry name" value="alk_sulf_monoox"/>
    <property type="match status" value="1"/>
</dbReference>
<dbReference type="NCBIfam" id="NF001939">
    <property type="entry name" value="PRK00719.1"/>
    <property type="match status" value="1"/>
</dbReference>
<dbReference type="PANTHER" id="PTHR42847">
    <property type="entry name" value="ALKANESULFONATE MONOOXYGENASE"/>
    <property type="match status" value="1"/>
</dbReference>
<dbReference type="PANTHER" id="PTHR42847:SF4">
    <property type="entry name" value="ALKANESULFONATE MONOOXYGENASE-RELATED"/>
    <property type="match status" value="1"/>
</dbReference>
<dbReference type="Pfam" id="PF00296">
    <property type="entry name" value="Bac_luciferase"/>
    <property type="match status" value="1"/>
</dbReference>
<dbReference type="SUPFAM" id="SSF51679">
    <property type="entry name" value="Bacterial luciferase-like"/>
    <property type="match status" value="1"/>
</dbReference>
<protein>
    <recommendedName>
        <fullName evidence="1">Alkanesulfonate monooxygenase</fullName>
        <ecNumber evidence="1">1.14.14.5</ecNumber>
    </recommendedName>
    <alternativeName>
        <fullName evidence="1">FMNH2-dependent aliphatic sulfonate monooxygenase</fullName>
    </alternativeName>
</protein>
<organism>
    <name type="scientific">Escherichia coli (strain SMS-3-5 / SECEC)</name>
    <dbReference type="NCBI Taxonomy" id="439855"/>
    <lineage>
        <taxon>Bacteria</taxon>
        <taxon>Pseudomonadati</taxon>
        <taxon>Pseudomonadota</taxon>
        <taxon>Gammaproteobacteria</taxon>
        <taxon>Enterobacterales</taxon>
        <taxon>Enterobacteriaceae</taxon>
        <taxon>Escherichia</taxon>
    </lineage>
</organism>
<accession>B1LJS7</accession>
<gene>
    <name evidence="1" type="primary">ssuD</name>
    <name type="ordered locus">EcSMS35_2184</name>
</gene>
<comment type="function">
    <text evidence="1">Catalyzes the desulfonation of aliphatic sulfonates.</text>
</comment>
<comment type="catalytic activity">
    <reaction evidence="1">
        <text>an alkanesulfonate + FMNH2 + O2 = an aldehyde + FMN + sulfite + H2O + 2 H(+)</text>
        <dbReference type="Rhea" id="RHEA:23064"/>
        <dbReference type="ChEBI" id="CHEBI:15377"/>
        <dbReference type="ChEBI" id="CHEBI:15378"/>
        <dbReference type="ChEBI" id="CHEBI:15379"/>
        <dbReference type="ChEBI" id="CHEBI:17359"/>
        <dbReference type="ChEBI" id="CHEBI:17478"/>
        <dbReference type="ChEBI" id="CHEBI:57618"/>
        <dbReference type="ChEBI" id="CHEBI:58210"/>
        <dbReference type="ChEBI" id="CHEBI:134249"/>
        <dbReference type="EC" id="1.14.14.5"/>
    </reaction>
</comment>
<comment type="subunit">
    <text evidence="1">Homotetramer.</text>
</comment>
<comment type="miscellaneous">
    <text evidence="1">FMNH(2) which is absolutely required for this enzymatic reaction, is provided by SsuE.</text>
</comment>
<comment type="similarity">
    <text evidence="1">Belongs to the SsuD family.</text>
</comment>
<reference key="1">
    <citation type="journal article" date="2008" name="J. Bacteriol.">
        <title>Insights into the environmental resistance gene pool from the genome sequence of the multidrug-resistant environmental isolate Escherichia coli SMS-3-5.</title>
        <authorList>
            <person name="Fricke W.F."/>
            <person name="Wright M.S."/>
            <person name="Lindell A.H."/>
            <person name="Harkins D.M."/>
            <person name="Baker-Austin C."/>
            <person name="Ravel J."/>
            <person name="Stepanauskas R."/>
        </authorList>
    </citation>
    <scope>NUCLEOTIDE SEQUENCE [LARGE SCALE GENOMIC DNA]</scope>
    <source>
        <strain>SMS-3-5 / SECEC</strain>
    </source>
</reference>
<feature type="chain" id="PRO_1000139623" description="Alkanesulfonate monooxygenase">
    <location>
        <begin position="1"/>
        <end position="381"/>
    </location>
</feature>
<proteinExistence type="inferred from homology"/>
<keyword id="KW-0285">Flavoprotein</keyword>
<keyword id="KW-0288">FMN</keyword>
<keyword id="KW-0503">Monooxygenase</keyword>
<keyword id="KW-0560">Oxidoreductase</keyword>
<evidence type="ECO:0000255" key="1">
    <source>
        <dbReference type="HAMAP-Rule" id="MF_01229"/>
    </source>
</evidence>
<name>SSUD_ECOSM</name>